<dbReference type="EC" id="5.1.1.7" evidence="1"/>
<dbReference type="EMBL" id="CP001063">
    <property type="protein sequence ID" value="ACD10378.1"/>
    <property type="molecule type" value="Genomic_DNA"/>
</dbReference>
<dbReference type="RefSeq" id="WP_001160649.1">
    <property type="nucleotide sequence ID" value="NC_010658.1"/>
</dbReference>
<dbReference type="SMR" id="B2TUW5"/>
<dbReference type="STRING" id="344609.SbBS512_E4269"/>
<dbReference type="KEGG" id="sbc:SbBS512_E4269"/>
<dbReference type="HOGENOM" id="CLU_053306_1_1_6"/>
<dbReference type="UniPathway" id="UPA00034">
    <property type="reaction ID" value="UER00025"/>
</dbReference>
<dbReference type="Proteomes" id="UP000001030">
    <property type="component" value="Chromosome"/>
</dbReference>
<dbReference type="GO" id="GO:0005829">
    <property type="term" value="C:cytosol"/>
    <property type="evidence" value="ECO:0007669"/>
    <property type="project" value="TreeGrafter"/>
</dbReference>
<dbReference type="GO" id="GO:0008837">
    <property type="term" value="F:diaminopimelate epimerase activity"/>
    <property type="evidence" value="ECO:0007669"/>
    <property type="project" value="UniProtKB-UniRule"/>
</dbReference>
<dbReference type="GO" id="GO:0009089">
    <property type="term" value="P:lysine biosynthetic process via diaminopimelate"/>
    <property type="evidence" value="ECO:0007669"/>
    <property type="project" value="UniProtKB-UniRule"/>
</dbReference>
<dbReference type="FunFam" id="3.10.310.10:FF:000001">
    <property type="entry name" value="Diaminopimelate epimerase"/>
    <property type="match status" value="1"/>
</dbReference>
<dbReference type="FunFam" id="3.10.310.10:FF:000002">
    <property type="entry name" value="Diaminopimelate epimerase"/>
    <property type="match status" value="1"/>
</dbReference>
<dbReference type="Gene3D" id="3.10.310.10">
    <property type="entry name" value="Diaminopimelate Epimerase, Chain A, domain 1"/>
    <property type="match status" value="2"/>
</dbReference>
<dbReference type="HAMAP" id="MF_00197">
    <property type="entry name" value="DAP_epimerase"/>
    <property type="match status" value="1"/>
</dbReference>
<dbReference type="InterPro" id="IPR018510">
    <property type="entry name" value="DAP_epimerase_AS"/>
</dbReference>
<dbReference type="InterPro" id="IPR001653">
    <property type="entry name" value="DAP_epimerase_DapF"/>
</dbReference>
<dbReference type="NCBIfam" id="TIGR00652">
    <property type="entry name" value="DapF"/>
    <property type="match status" value="1"/>
</dbReference>
<dbReference type="PANTHER" id="PTHR31689:SF0">
    <property type="entry name" value="DIAMINOPIMELATE EPIMERASE"/>
    <property type="match status" value="1"/>
</dbReference>
<dbReference type="PANTHER" id="PTHR31689">
    <property type="entry name" value="DIAMINOPIMELATE EPIMERASE, CHLOROPLASTIC"/>
    <property type="match status" value="1"/>
</dbReference>
<dbReference type="Pfam" id="PF01678">
    <property type="entry name" value="DAP_epimerase"/>
    <property type="match status" value="2"/>
</dbReference>
<dbReference type="SUPFAM" id="SSF54506">
    <property type="entry name" value="Diaminopimelate epimerase-like"/>
    <property type="match status" value="1"/>
</dbReference>
<dbReference type="PROSITE" id="PS01326">
    <property type="entry name" value="DAP_EPIMERASE"/>
    <property type="match status" value="1"/>
</dbReference>
<evidence type="ECO:0000255" key="1">
    <source>
        <dbReference type="HAMAP-Rule" id="MF_00197"/>
    </source>
</evidence>
<feature type="chain" id="PRO_1000099268" description="Diaminopimelate epimerase">
    <location>
        <begin position="1"/>
        <end position="274"/>
    </location>
</feature>
<feature type="active site" description="Proton donor" evidence="1">
    <location>
        <position position="73"/>
    </location>
</feature>
<feature type="active site" description="Proton acceptor" evidence="1">
    <location>
        <position position="217"/>
    </location>
</feature>
<feature type="binding site" evidence="1">
    <location>
        <position position="11"/>
    </location>
    <ligand>
        <name>substrate</name>
    </ligand>
</feature>
<feature type="binding site" evidence="1">
    <location>
        <position position="44"/>
    </location>
    <ligand>
        <name>substrate</name>
    </ligand>
</feature>
<feature type="binding site" evidence="1">
    <location>
        <position position="64"/>
    </location>
    <ligand>
        <name>substrate</name>
    </ligand>
</feature>
<feature type="binding site" evidence="1">
    <location>
        <begin position="74"/>
        <end position="75"/>
    </location>
    <ligand>
        <name>substrate</name>
    </ligand>
</feature>
<feature type="binding site" evidence="1">
    <location>
        <position position="157"/>
    </location>
    <ligand>
        <name>substrate</name>
    </ligand>
</feature>
<feature type="binding site" evidence="1">
    <location>
        <position position="190"/>
    </location>
    <ligand>
        <name>substrate</name>
    </ligand>
</feature>
<feature type="binding site" evidence="1">
    <location>
        <begin position="208"/>
        <end position="209"/>
    </location>
    <ligand>
        <name>substrate</name>
    </ligand>
</feature>
<feature type="binding site" evidence="1">
    <location>
        <begin position="218"/>
        <end position="219"/>
    </location>
    <ligand>
        <name>substrate</name>
    </ligand>
</feature>
<feature type="site" description="Could be important to modulate the pK values of the two catalytic cysteine residues" evidence="1">
    <location>
        <position position="159"/>
    </location>
</feature>
<feature type="site" description="Could be important to modulate the pK values of the two catalytic cysteine residues" evidence="1">
    <location>
        <position position="208"/>
    </location>
</feature>
<feature type="site" description="Important for dimerization" evidence="1">
    <location>
        <position position="268"/>
    </location>
</feature>
<reference key="1">
    <citation type="submission" date="2008-05" db="EMBL/GenBank/DDBJ databases">
        <title>Complete sequence of Shigella boydii serotype 18 strain BS512.</title>
        <authorList>
            <person name="Rasko D.A."/>
            <person name="Rosovitz M."/>
            <person name="Maurelli A.T."/>
            <person name="Myers G."/>
            <person name="Seshadri R."/>
            <person name="Cer R."/>
            <person name="Jiang L."/>
            <person name="Ravel J."/>
            <person name="Sebastian Y."/>
        </authorList>
    </citation>
    <scope>NUCLEOTIDE SEQUENCE [LARGE SCALE GENOMIC DNA]</scope>
    <source>
        <strain>CDC 3083-94 / BS512</strain>
    </source>
</reference>
<accession>B2TUW5</accession>
<comment type="function">
    <text evidence="1">Catalyzes the stereoinversion of LL-2,6-diaminopimelate (L,L-DAP) to meso-diaminopimelate (meso-DAP), a precursor of L-lysine and an essential component of the bacterial peptidoglycan.</text>
</comment>
<comment type="catalytic activity">
    <reaction evidence="1">
        <text>(2S,6S)-2,6-diaminopimelate = meso-2,6-diaminopimelate</text>
        <dbReference type="Rhea" id="RHEA:15393"/>
        <dbReference type="ChEBI" id="CHEBI:57609"/>
        <dbReference type="ChEBI" id="CHEBI:57791"/>
        <dbReference type="EC" id="5.1.1.7"/>
    </reaction>
</comment>
<comment type="pathway">
    <text evidence="1">Amino-acid biosynthesis; L-lysine biosynthesis via DAP pathway; DL-2,6-diaminopimelate from LL-2,6-diaminopimelate: step 1/1.</text>
</comment>
<comment type="subunit">
    <text evidence="1">Homodimer.</text>
</comment>
<comment type="subcellular location">
    <subcellularLocation>
        <location evidence="1">Cytoplasm</location>
    </subcellularLocation>
</comment>
<comment type="similarity">
    <text evidence="1">Belongs to the diaminopimelate epimerase family.</text>
</comment>
<organism>
    <name type="scientific">Shigella boydii serotype 18 (strain CDC 3083-94 / BS512)</name>
    <dbReference type="NCBI Taxonomy" id="344609"/>
    <lineage>
        <taxon>Bacteria</taxon>
        <taxon>Pseudomonadati</taxon>
        <taxon>Pseudomonadota</taxon>
        <taxon>Gammaproteobacteria</taxon>
        <taxon>Enterobacterales</taxon>
        <taxon>Enterobacteriaceae</taxon>
        <taxon>Shigella</taxon>
    </lineage>
</organism>
<name>DAPF_SHIB3</name>
<protein>
    <recommendedName>
        <fullName evidence="1">Diaminopimelate epimerase</fullName>
        <shortName evidence="1">DAP epimerase</shortName>
        <ecNumber evidence="1">5.1.1.7</ecNumber>
    </recommendedName>
    <alternativeName>
        <fullName evidence="1">PLP-independent amino acid racemase</fullName>
    </alternativeName>
</protein>
<sequence length="274" mass="30205">MQFSKMHGLGNDFMVVDAVTQNVFFSPELIRRLADRHLGVGFDQLLVIEPPYDPELDFHYRIFNADGSEVAQCGNGARCFARFVRLKGLTNKRDIRVSTANGRMVLTVTDDDLVRVNMGEPNFEPSAVPFRANKAEKTYIMRAAEQTILCGVVSIGNPHCVIQVDDVDTAAVETLGPVLESHERFPERANIGFMQVVKREHIRLRVYERGAGETQACGSGACAAVAVGIQQGLLAEEVRVELPGGRLDIAWKGPGHPLYMTGPAVHVYDGFIHL</sequence>
<proteinExistence type="inferred from homology"/>
<keyword id="KW-0028">Amino-acid biosynthesis</keyword>
<keyword id="KW-0963">Cytoplasm</keyword>
<keyword id="KW-0413">Isomerase</keyword>
<keyword id="KW-0457">Lysine biosynthesis</keyword>
<keyword id="KW-1185">Reference proteome</keyword>
<gene>
    <name evidence="1" type="primary">dapF</name>
    <name type="ordered locus">SbBS512_E4269</name>
</gene>